<reference key="1">
    <citation type="journal article" date="2007" name="Genome Biol.">
        <title>Characterization and modeling of the Haemophilus influenzae core and supragenomes based on the complete genomic sequences of Rd and 12 clinical nontypeable strains.</title>
        <authorList>
            <person name="Hogg J.S."/>
            <person name="Hu F.Z."/>
            <person name="Janto B."/>
            <person name="Boissy R."/>
            <person name="Hayes J."/>
            <person name="Keefe R."/>
            <person name="Post J.C."/>
            <person name="Ehrlich G.D."/>
        </authorList>
    </citation>
    <scope>NUCLEOTIDE SEQUENCE [LARGE SCALE GENOMIC DNA]</scope>
    <source>
        <strain>PittEE</strain>
    </source>
</reference>
<sequence>MNTSRLFSLLFQGSLVKRIAAGLVLGIVVALISAPLQETIGFNLAEKVGVLGTIFVKALRAVAPILIFFLVMAALANRKIGTKSNMKEIIVLYLLGTFLAAFVAVIAGFAFPTEVVLAAKEDSSSAPQAVGQVLLTLILNVVDNPLNAIFKANFIGVLAWSIGLGLALRHASDATKNVLSDFAEGVSKIVHVIISFAPFGVFGLVAETLSDKGLVALGGYVQLLAVLIGTMLFTAFVVNPILVYWKIRRNPYPLVWTCVRESGVTAFFTRSSAANIPVNIELAKRLNLDEETYSVSIPLGANINMAGAAITITILTLAAVHTLGLEVSFVSALLLSIVAALCACGASGVAGGSLLLIPLACSLFGISDDVAAQMIGVGFIIGILQDSTETALNSSTDVLFTAAVCMEEERKNAA</sequence>
<evidence type="ECO:0000255" key="1">
    <source>
        <dbReference type="HAMAP-Rule" id="MF_01582"/>
    </source>
</evidence>
<organism>
    <name type="scientific">Haemophilus influenzae (strain PittEE)</name>
    <dbReference type="NCBI Taxonomy" id="374930"/>
    <lineage>
        <taxon>Bacteria</taxon>
        <taxon>Pseudomonadati</taxon>
        <taxon>Pseudomonadota</taxon>
        <taxon>Gammaproteobacteria</taxon>
        <taxon>Pasteurellales</taxon>
        <taxon>Pasteurellaceae</taxon>
        <taxon>Haemophilus</taxon>
    </lineage>
</organism>
<name>SSTT_HAEIE</name>
<keyword id="KW-0029">Amino-acid transport</keyword>
<keyword id="KW-0997">Cell inner membrane</keyword>
<keyword id="KW-1003">Cell membrane</keyword>
<keyword id="KW-0472">Membrane</keyword>
<keyword id="KW-0769">Symport</keyword>
<keyword id="KW-0812">Transmembrane</keyword>
<keyword id="KW-1133">Transmembrane helix</keyword>
<keyword id="KW-0813">Transport</keyword>
<accession>A5UCD6</accession>
<feature type="chain" id="PRO_0000309093" description="Serine/threonine transporter SstT">
    <location>
        <begin position="1"/>
        <end position="414"/>
    </location>
</feature>
<feature type="transmembrane region" description="Helical" evidence="1">
    <location>
        <begin position="22"/>
        <end position="42"/>
    </location>
</feature>
<feature type="transmembrane region" description="Helical" evidence="1">
    <location>
        <begin position="54"/>
        <end position="74"/>
    </location>
</feature>
<feature type="transmembrane region" description="Helical" evidence="1">
    <location>
        <begin position="89"/>
        <end position="109"/>
    </location>
</feature>
<feature type="transmembrane region" description="Helical" evidence="1">
    <location>
        <begin position="148"/>
        <end position="168"/>
    </location>
</feature>
<feature type="transmembrane region" description="Helical" evidence="1">
    <location>
        <begin position="189"/>
        <end position="209"/>
    </location>
</feature>
<feature type="transmembrane region" description="Helical" evidence="1">
    <location>
        <begin position="223"/>
        <end position="243"/>
    </location>
</feature>
<feature type="transmembrane region" description="Helical" evidence="1">
    <location>
        <begin position="305"/>
        <end position="325"/>
    </location>
</feature>
<feature type="transmembrane region" description="Helical" evidence="1">
    <location>
        <begin position="337"/>
        <end position="357"/>
    </location>
</feature>
<proteinExistence type="inferred from homology"/>
<gene>
    <name evidence="1" type="primary">sstT</name>
    <name type="ordered locus">CGSHiEE_05305</name>
</gene>
<protein>
    <recommendedName>
        <fullName evidence="1">Serine/threonine transporter SstT</fullName>
    </recommendedName>
    <alternativeName>
        <fullName evidence="1">Na(+)/serine-threonine symporter</fullName>
    </alternativeName>
</protein>
<dbReference type="EMBL" id="CP000671">
    <property type="protein sequence ID" value="ABQ98437.1"/>
    <property type="molecule type" value="Genomic_DNA"/>
</dbReference>
<dbReference type="SMR" id="A5UCD6"/>
<dbReference type="KEGG" id="hip:CGSHiEE_05305"/>
<dbReference type="HOGENOM" id="CLU_044581_0_0_6"/>
<dbReference type="GO" id="GO:0005886">
    <property type="term" value="C:plasma membrane"/>
    <property type="evidence" value="ECO:0007669"/>
    <property type="project" value="UniProtKB-SubCell"/>
</dbReference>
<dbReference type="GO" id="GO:0005295">
    <property type="term" value="F:neutral L-amino acid:sodium symporter activity"/>
    <property type="evidence" value="ECO:0007669"/>
    <property type="project" value="TreeGrafter"/>
</dbReference>
<dbReference type="GO" id="GO:0032329">
    <property type="term" value="P:serine transport"/>
    <property type="evidence" value="ECO:0007669"/>
    <property type="project" value="InterPro"/>
</dbReference>
<dbReference type="GO" id="GO:0015826">
    <property type="term" value="P:threonine transport"/>
    <property type="evidence" value="ECO:0007669"/>
    <property type="project" value="InterPro"/>
</dbReference>
<dbReference type="FunFam" id="1.10.3860.10:FF:000003">
    <property type="entry name" value="Serine/threonine transporter sstT"/>
    <property type="match status" value="1"/>
</dbReference>
<dbReference type="Gene3D" id="1.10.3860.10">
    <property type="entry name" value="Sodium:dicarboxylate symporter"/>
    <property type="match status" value="1"/>
</dbReference>
<dbReference type="HAMAP" id="MF_01582">
    <property type="entry name" value="Ser_Thr_transp_SstT"/>
    <property type="match status" value="1"/>
</dbReference>
<dbReference type="InterPro" id="IPR001991">
    <property type="entry name" value="Na-dicarboxylate_symporter"/>
</dbReference>
<dbReference type="InterPro" id="IPR036458">
    <property type="entry name" value="Na:dicarbo_symporter_sf"/>
</dbReference>
<dbReference type="InterPro" id="IPR023025">
    <property type="entry name" value="Ser_Thr_transp_SstT"/>
</dbReference>
<dbReference type="NCBIfam" id="NF010151">
    <property type="entry name" value="PRK13628.1"/>
    <property type="match status" value="1"/>
</dbReference>
<dbReference type="PANTHER" id="PTHR42865">
    <property type="entry name" value="PROTON/GLUTAMATE-ASPARTATE SYMPORTER"/>
    <property type="match status" value="1"/>
</dbReference>
<dbReference type="PANTHER" id="PTHR42865:SF8">
    <property type="entry name" value="SERINE_THREONINE TRANSPORTER SSTT"/>
    <property type="match status" value="1"/>
</dbReference>
<dbReference type="Pfam" id="PF00375">
    <property type="entry name" value="SDF"/>
    <property type="match status" value="1"/>
</dbReference>
<dbReference type="PRINTS" id="PR00173">
    <property type="entry name" value="EDTRNSPORT"/>
</dbReference>
<dbReference type="SUPFAM" id="SSF118215">
    <property type="entry name" value="Proton glutamate symport protein"/>
    <property type="match status" value="1"/>
</dbReference>
<comment type="function">
    <text evidence="1">Involved in the import of serine and threonine into the cell, with the concomitant import of sodium (symport system).</text>
</comment>
<comment type="catalytic activity">
    <reaction evidence="1">
        <text>L-serine(in) + Na(+)(in) = L-serine(out) + Na(+)(out)</text>
        <dbReference type="Rhea" id="RHEA:29575"/>
        <dbReference type="ChEBI" id="CHEBI:29101"/>
        <dbReference type="ChEBI" id="CHEBI:33384"/>
    </reaction>
    <physiologicalReaction direction="right-to-left" evidence="1">
        <dbReference type="Rhea" id="RHEA:29577"/>
    </physiologicalReaction>
</comment>
<comment type="catalytic activity">
    <reaction evidence="1">
        <text>L-threonine(in) + Na(+)(in) = L-threonine(out) + Na(+)(out)</text>
        <dbReference type="Rhea" id="RHEA:69999"/>
        <dbReference type="ChEBI" id="CHEBI:29101"/>
        <dbReference type="ChEBI" id="CHEBI:57926"/>
    </reaction>
    <physiologicalReaction direction="right-to-left" evidence="1">
        <dbReference type="Rhea" id="RHEA:70001"/>
    </physiologicalReaction>
</comment>
<comment type="subcellular location">
    <subcellularLocation>
        <location evidence="1">Cell inner membrane</location>
        <topology evidence="1">Multi-pass membrane protein</topology>
    </subcellularLocation>
</comment>
<comment type="similarity">
    <text evidence="1">Belongs to the dicarboxylate/amino acid:cation symporter (DAACS) (TC 2.A.23) family.</text>
</comment>